<proteinExistence type="inferred from homology"/>
<feature type="chain" id="PRO_1000018962" description="Bifunctional purine biosynthesis protein PurH">
    <location>
        <begin position="1"/>
        <end position="492"/>
    </location>
</feature>
<feature type="domain" description="MGS-like" evidence="2">
    <location>
        <begin position="1"/>
        <end position="144"/>
    </location>
</feature>
<keyword id="KW-0378">Hydrolase</keyword>
<keyword id="KW-0511">Multifunctional enzyme</keyword>
<keyword id="KW-0658">Purine biosynthesis</keyword>
<keyword id="KW-1185">Reference proteome</keyword>
<keyword id="KW-0808">Transferase</keyword>
<dbReference type="EC" id="2.1.2.3" evidence="1"/>
<dbReference type="EC" id="3.5.4.10" evidence="1"/>
<dbReference type="EMBL" id="CP000253">
    <property type="protein sequence ID" value="ABD30139.1"/>
    <property type="molecule type" value="Genomic_DNA"/>
</dbReference>
<dbReference type="RefSeq" id="WP_000709290.1">
    <property type="nucleotide sequence ID" value="NZ_LS483365.1"/>
</dbReference>
<dbReference type="RefSeq" id="YP_499567.1">
    <property type="nucleotide sequence ID" value="NC_007795.1"/>
</dbReference>
<dbReference type="SMR" id="Q2FZI6"/>
<dbReference type="STRING" id="93061.SAOUHSC_01017"/>
<dbReference type="PaxDb" id="1280-SAXN108_1070"/>
<dbReference type="GeneID" id="3920278"/>
<dbReference type="KEGG" id="sao:SAOUHSC_01017"/>
<dbReference type="PATRIC" id="fig|93061.5.peg.932"/>
<dbReference type="eggNOG" id="COG0138">
    <property type="taxonomic scope" value="Bacteria"/>
</dbReference>
<dbReference type="HOGENOM" id="CLU_016316_5_2_9"/>
<dbReference type="OrthoDB" id="9802065at2"/>
<dbReference type="UniPathway" id="UPA00074">
    <property type="reaction ID" value="UER00133"/>
</dbReference>
<dbReference type="UniPathway" id="UPA00074">
    <property type="reaction ID" value="UER00135"/>
</dbReference>
<dbReference type="PRO" id="PR:Q2FZI6"/>
<dbReference type="Proteomes" id="UP000008816">
    <property type="component" value="Chromosome"/>
</dbReference>
<dbReference type="GO" id="GO:0005829">
    <property type="term" value="C:cytosol"/>
    <property type="evidence" value="ECO:0000318"/>
    <property type="project" value="GO_Central"/>
</dbReference>
<dbReference type="GO" id="GO:0003937">
    <property type="term" value="F:IMP cyclohydrolase activity"/>
    <property type="evidence" value="ECO:0000318"/>
    <property type="project" value="GO_Central"/>
</dbReference>
<dbReference type="GO" id="GO:0004643">
    <property type="term" value="F:phosphoribosylaminoimidazolecarboxamide formyltransferase activity"/>
    <property type="evidence" value="ECO:0000318"/>
    <property type="project" value="GO_Central"/>
</dbReference>
<dbReference type="GO" id="GO:0006189">
    <property type="term" value="P:'de novo' IMP biosynthetic process"/>
    <property type="evidence" value="ECO:0000318"/>
    <property type="project" value="GO_Central"/>
</dbReference>
<dbReference type="CDD" id="cd01421">
    <property type="entry name" value="IMPCH"/>
    <property type="match status" value="1"/>
</dbReference>
<dbReference type="FunFam" id="3.40.140.20:FF:000001">
    <property type="entry name" value="Bifunctional purine biosynthesis protein PurH"/>
    <property type="match status" value="1"/>
</dbReference>
<dbReference type="FunFam" id="3.40.140.20:FF:000002">
    <property type="entry name" value="Bifunctional purine biosynthesis protein PurH"/>
    <property type="match status" value="1"/>
</dbReference>
<dbReference type="FunFam" id="3.40.50.1380:FF:000001">
    <property type="entry name" value="Bifunctional purine biosynthesis protein PurH"/>
    <property type="match status" value="1"/>
</dbReference>
<dbReference type="Gene3D" id="3.40.140.20">
    <property type="match status" value="2"/>
</dbReference>
<dbReference type="Gene3D" id="3.40.50.1380">
    <property type="entry name" value="Methylglyoxal synthase-like domain"/>
    <property type="match status" value="1"/>
</dbReference>
<dbReference type="HAMAP" id="MF_00139">
    <property type="entry name" value="PurH"/>
    <property type="match status" value="1"/>
</dbReference>
<dbReference type="InterPro" id="IPR024051">
    <property type="entry name" value="AICAR_Tfase_dup_dom_sf"/>
</dbReference>
<dbReference type="InterPro" id="IPR016193">
    <property type="entry name" value="Cytidine_deaminase-like"/>
</dbReference>
<dbReference type="InterPro" id="IPR011607">
    <property type="entry name" value="MGS-like_dom"/>
</dbReference>
<dbReference type="InterPro" id="IPR036914">
    <property type="entry name" value="MGS-like_dom_sf"/>
</dbReference>
<dbReference type="InterPro" id="IPR002695">
    <property type="entry name" value="PurH-like"/>
</dbReference>
<dbReference type="NCBIfam" id="NF002049">
    <property type="entry name" value="PRK00881.1"/>
    <property type="match status" value="1"/>
</dbReference>
<dbReference type="NCBIfam" id="TIGR00355">
    <property type="entry name" value="purH"/>
    <property type="match status" value="1"/>
</dbReference>
<dbReference type="PANTHER" id="PTHR11692:SF0">
    <property type="entry name" value="BIFUNCTIONAL PURINE BIOSYNTHESIS PROTEIN ATIC"/>
    <property type="match status" value="1"/>
</dbReference>
<dbReference type="PANTHER" id="PTHR11692">
    <property type="entry name" value="BIFUNCTIONAL PURINE BIOSYNTHESIS PROTEIN PURH"/>
    <property type="match status" value="1"/>
</dbReference>
<dbReference type="Pfam" id="PF01808">
    <property type="entry name" value="AICARFT_IMPCHas"/>
    <property type="match status" value="1"/>
</dbReference>
<dbReference type="Pfam" id="PF02142">
    <property type="entry name" value="MGS"/>
    <property type="match status" value="1"/>
</dbReference>
<dbReference type="PIRSF" id="PIRSF000414">
    <property type="entry name" value="AICARFT_IMPCHas"/>
    <property type="match status" value="1"/>
</dbReference>
<dbReference type="SMART" id="SM00798">
    <property type="entry name" value="AICARFT_IMPCHas"/>
    <property type="match status" value="1"/>
</dbReference>
<dbReference type="SMART" id="SM00851">
    <property type="entry name" value="MGS"/>
    <property type="match status" value="1"/>
</dbReference>
<dbReference type="SUPFAM" id="SSF53927">
    <property type="entry name" value="Cytidine deaminase-like"/>
    <property type="match status" value="1"/>
</dbReference>
<dbReference type="SUPFAM" id="SSF52335">
    <property type="entry name" value="Methylglyoxal synthase-like"/>
    <property type="match status" value="1"/>
</dbReference>
<dbReference type="PROSITE" id="PS51855">
    <property type="entry name" value="MGS"/>
    <property type="match status" value="1"/>
</dbReference>
<comment type="catalytic activity">
    <reaction evidence="1">
        <text>(6R)-10-formyltetrahydrofolate + 5-amino-1-(5-phospho-beta-D-ribosyl)imidazole-4-carboxamide = 5-formamido-1-(5-phospho-D-ribosyl)imidazole-4-carboxamide + (6S)-5,6,7,8-tetrahydrofolate</text>
        <dbReference type="Rhea" id="RHEA:22192"/>
        <dbReference type="ChEBI" id="CHEBI:57453"/>
        <dbReference type="ChEBI" id="CHEBI:58467"/>
        <dbReference type="ChEBI" id="CHEBI:58475"/>
        <dbReference type="ChEBI" id="CHEBI:195366"/>
        <dbReference type="EC" id="2.1.2.3"/>
    </reaction>
</comment>
<comment type="catalytic activity">
    <reaction evidence="1">
        <text>IMP + H2O = 5-formamido-1-(5-phospho-D-ribosyl)imidazole-4-carboxamide</text>
        <dbReference type="Rhea" id="RHEA:18445"/>
        <dbReference type="ChEBI" id="CHEBI:15377"/>
        <dbReference type="ChEBI" id="CHEBI:58053"/>
        <dbReference type="ChEBI" id="CHEBI:58467"/>
        <dbReference type="EC" id="3.5.4.10"/>
    </reaction>
</comment>
<comment type="pathway">
    <text evidence="1">Purine metabolism; IMP biosynthesis via de novo pathway; 5-formamido-1-(5-phospho-D-ribosyl)imidazole-4-carboxamide from 5-amino-1-(5-phospho-D-ribosyl)imidazole-4-carboxamide (10-formyl THF route): step 1/1.</text>
</comment>
<comment type="pathway">
    <text evidence="1">Purine metabolism; IMP biosynthesis via de novo pathway; IMP from 5-formamido-1-(5-phospho-D-ribosyl)imidazole-4-carboxamide: step 1/1.</text>
</comment>
<comment type="domain">
    <text evidence="1">The IMP cyclohydrolase activity resides in the N-terminal region.</text>
</comment>
<comment type="similarity">
    <text evidence="1">Belongs to the PurH family.</text>
</comment>
<sequence>MKKAILSVSNKTGIVEFAKALTQLNYELYSTGGTKRILDEANVPVRSVSDLTHFPEIMDGRVKTLHPAVHGGILADRNKPQHLNELSEQHIDLIDMVVVNLYPFQQTVANPDVTMDEAIENIDIGGPTMLRAAAKNYKHVTTIVHPADYQEVLTRLRNDSLDESYRQSLMIKVFEHTAEYDEAIVRFFKGDKETLRYGENPQQSAYFVRTSNAKHTIAGAKQLHGKQLSYNNIKDADATLALVKKFDTPATVAVKHMNPCGVGIGDTIEQAFQHAYEADSQSIFGGIVALNRAVTPELAEQLHSIFLEVIIAPKFTDEALDILKQKKNVRLLEIDMTIDSNEEEFVSVSGGYLVQDKDNYVVPKEEMKVVTEVAPTDEQWEAMLLGWKVVPSVKSNAIILSNNKQTVGIGAGQMNRVGAAKIALERAIEINDHVALVSDGFFPMGDTVELAAQHGIKAIIQPGGSIKDQDSIDMANKHGIAMVVTGTRHFKH</sequence>
<evidence type="ECO:0000255" key="1">
    <source>
        <dbReference type="HAMAP-Rule" id="MF_00139"/>
    </source>
</evidence>
<evidence type="ECO:0000255" key="2">
    <source>
        <dbReference type="PROSITE-ProRule" id="PRU01202"/>
    </source>
</evidence>
<gene>
    <name evidence="1" type="primary">purH</name>
    <name type="ordered locus">SAOUHSC_01017</name>
</gene>
<organism>
    <name type="scientific">Staphylococcus aureus (strain NCTC 8325 / PS 47)</name>
    <dbReference type="NCBI Taxonomy" id="93061"/>
    <lineage>
        <taxon>Bacteria</taxon>
        <taxon>Bacillati</taxon>
        <taxon>Bacillota</taxon>
        <taxon>Bacilli</taxon>
        <taxon>Bacillales</taxon>
        <taxon>Staphylococcaceae</taxon>
        <taxon>Staphylococcus</taxon>
    </lineage>
</organism>
<name>PUR9_STAA8</name>
<reference key="1">
    <citation type="book" date="2006" name="Gram positive pathogens, 2nd edition">
        <title>The Staphylococcus aureus NCTC 8325 genome.</title>
        <editorList>
            <person name="Fischetti V."/>
            <person name="Novick R."/>
            <person name="Ferretti J."/>
            <person name="Portnoy D."/>
            <person name="Rood J."/>
        </editorList>
        <authorList>
            <person name="Gillaspy A.F."/>
            <person name="Worrell V."/>
            <person name="Orvis J."/>
            <person name="Roe B.A."/>
            <person name="Dyer D.W."/>
            <person name="Iandolo J.J."/>
        </authorList>
    </citation>
    <scope>NUCLEOTIDE SEQUENCE [LARGE SCALE GENOMIC DNA]</scope>
    <source>
        <strain>NCTC 8325 / PS 47</strain>
    </source>
</reference>
<protein>
    <recommendedName>
        <fullName evidence="1">Bifunctional purine biosynthesis protein PurH</fullName>
    </recommendedName>
    <domain>
        <recommendedName>
            <fullName evidence="1">Phosphoribosylaminoimidazolecarboxamide formyltransferase</fullName>
            <ecNumber evidence="1">2.1.2.3</ecNumber>
        </recommendedName>
        <alternativeName>
            <fullName evidence="1">AICAR transformylase</fullName>
        </alternativeName>
    </domain>
    <domain>
        <recommendedName>
            <fullName evidence="1">IMP cyclohydrolase</fullName>
            <ecNumber evidence="1">3.5.4.10</ecNumber>
        </recommendedName>
        <alternativeName>
            <fullName evidence="1">ATIC</fullName>
        </alternativeName>
        <alternativeName>
            <fullName evidence="1">IMP synthase</fullName>
        </alternativeName>
        <alternativeName>
            <fullName evidence="1">Inosinicase</fullName>
        </alternativeName>
    </domain>
</protein>
<accession>Q2FZI6</accession>